<gene>
    <name evidence="2" type="primary">ddl</name>
    <name type="ordered locus">Sala_1878</name>
</gene>
<evidence type="ECO:0000250" key="1"/>
<evidence type="ECO:0000255" key="2">
    <source>
        <dbReference type="HAMAP-Rule" id="MF_00047"/>
    </source>
</evidence>
<name>DDL_SPHAL</name>
<comment type="function">
    <text evidence="2">Cell wall formation.</text>
</comment>
<comment type="catalytic activity">
    <reaction evidence="2">
        <text>2 D-alanine + ATP = D-alanyl-D-alanine + ADP + phosphate + H(+)</text>
        <dbReference type="Rhea" id="RHEA:11224"/>
        <dbReference type="ChEBI" id="CHEBI:15378"/>
        <dbReference type="ChEBI" id="CHEBI:30616"/>
        <dbReference type="ChEBI" id="CHEBI:43474"/>
        <dbReference type="ChEBI" id="CHEBI:57416"/>
        <dbReference type="ChEBI" id="CHEBI:57822"/>
        <dbReference type="ChEBI" id="CHEBI:456216"/>
        <dbReference type="EC" id="6.3.2.4"/>
    </reaction>
</comment>
<comment type="cofactor">
    <cofactor evidence="1">
        <name>Mg(2+)</name>
        <dbReference type="ChEBI" id="CHEBI:18420"/>
    </cofactor>
    <cofactor evidence="1">
        <name>Mn(2+)</name>
        <dbReference type="ChEBI" id="CHEBI:29035"/>
    </cofactor>
    <text evidence="1">Binds 2 magnesium or manganese ions per subunit.</text>
</comment>
<comment type="pathway">
    <text evidence="2">Cell wall biogenesis; peptidoglycan biosynthesis.</text>
</comment>
<comment type="subcellular location">
    <subcellularLocation>
        <location evidence="2">Cytoplasm</location>
    </subcellularLocation>
</comment>
<comment type="similarity">
    <text evidence="2">Belongs to the D-alanine--D-alanine ligase family.</text>
</comment>
<reference key="1">
    <citation type="journal article" date="2009" name="Proc. Natl. Acad. Sci. U.S.A.">
        <title>The genomic basis of trophic strategy in marine bacteria.</title>
        <authorList>
            <person name="Lauro F.M."/>
            <person name="McDougald D."/>
            <person name="Thomas T."/>
            <person name="Williams T.J."/>
            <person name="Egan S."/>
            <person name="Rice S."/>
            <person name="DeMaere M.Z."/>
            <person name="Ting L."/>
            <person name="Ertan H."/>
            <person name="Johnson J."/>
            <person name="Ferriera S."/>
            <person name="Lapidus A."/>
            <person name="Anderson I."/>
            <person name="Kyrpides N."/>
            <person name="Munk A.C."/>
            <person name="Detter C."/>
            <person name="Han C.S."/>
            <person name="Brown M.V."/>
            <person name="Robb F.T."/>
            <person name="Kjelleberg S."/>
            <person name="Cavicchioli R."/>
        </authorList>
    </citation>
    <scope>NUCLEOTIDE SEQUENCE [LARGE SCALE GENOMIC DNA]</scope>
    <source>
        <strain>DSM 13593 / LMG 18877 / RB2256</strain>
    </source>
</reference>
<feature type="chain" id="PRO_0000341177" description="D-alanine--D-alanine ligase">
    <location>
        <begin position="1"/>
        <end position="308"/>
    </location>
</feature>
<feature type="domain" description="ATP-grasp" evidence="2">
    <location>
        <begin position="104"/>
        <end position="304"/>
    </location>
</feature>
<feature type="binding site" evidence="2">
    <location>
        <begin position="131"/>
        <end position="187"/>
    </location>
    <ligand>
        <name>ATP</name>
        <dbReference type="ChEBI" id="CHEBI:30616"/>
    </ligand>
</feature>
<feature type="binding site" evidence="2">
    <location>
        <position position="255"/>
    </location>
    <ligand>
        <name>Mg(2+)</name>
        <dbReference type="ChEBI" id="CHEBI:18420"/>
        <label>1</label>
    </ligand>
</feature>
<feature type="binding site" evidence="2">
    <location>
        <position position="271"/>
    </location>
    <ligand>
        <name>Mg(2+)</name>
        <dbReference type="ChEBI" id="CHEBI:18420"/>
        <label>1</label>
    </ligand>
</feature>
<feature type="binding site" evidence="2">
    <location>
        <position position="271"/>
    </location>
    <ligand>
        <name>Mg(2+)</name>
        <dbReference type="ChEBI" id="CHEBI:18420"/>
        <label>2</label>
    </ligand>
</feature>
<feature type="binding site" evidence="2">
    <location>
        <position position="273"/>
    </location>
    <ligand>
        <name>Mg(2+)</name>
        <dbReference type="ChEBI" id="CHEBI:18420"/>
        <label>2</label>
    </ligand>
</feature>
<sequence>MSRGPWHVAVLMGGWSAEREVSLMSGKGVADALESRGHKVTRIDMDRDVALRLAEAKPDVVFNALHGVPGEDGTVQGMLDLMGFRYTHSGLVTSVIAIDKELTKQALVPHGIPMPTGTMVDSESLFSVDPLPRPYVLKPVNEGSSVGVAIVRDDSNYGNPISRDALGPWQQFDRLLAEPFIKGRELTVAVLGDTALAVTELRVKSGFYDYDAKYTDGLTEHVCPADVPDDVAQRMKDLALQAHRLLGCKGASRSDFRWDDEHGLAGIFLLEVNTQPGMTPLSLVPEQARAVGMDYAELVERIVEEALT</sequence>
<proteinExistence type="inferred from homology"/>
<protein>
    <recommendedName>
        <fullName evidence="2">D-alanine--D-alanine ligase</fullName>
        <ecNumber evidence="2">6.3.2.4</ecNumber>
    </recommendedName>
    <alternativeName>
        <fullName evidence="2">D-Ala-D-Ala ligase</fullName>
    </alternativeName>
    <alternativeName>
        <fullName evidence="2">D-alanylalanine synthetase</fullName>
    </alternativeName>
</protein>
<accession>Q1GRY2</accession>
<organism>
    <name type="scientific">Sphingopyxis alaskensis (strain DSM 13593 / LMG 18877 / RB2256)</name>
    <name type="common">Sphingomonas alaskensis</name>
    <dbReference type="NCBI Taxonomy" id="317655"/>
    <lineage>
        <taxon>Bacteria</taxon>
        <taxon>Pseudomonadati</taxon>
        <taxon>Pseudomonadota</taxon>
        <taxon>Alphaproteobacteria</taxon>
        <taxon>Sphingomonadales</taxon>
        <taxon>Sphingomonadaceae</taxon>
        <taxon>Sphingopyxis</taxon>
    </lineage>
</organism>
<keyword id="KW-0067">ATP-binding</keyword>
<keyword id="KW-0133">Cell shape</keyword>
<keyword id="KW-0961">Cell wall biogenesis/degradation</keyword>
<keyword id="KW-0963">Cytoplasm</keyword>
<keyword id="KW-0436">Ligase</keyword>
<keyword id="KW-0460">Magnesium</keyword>
<keyword id="KW-0464">Manganese</keyword>
<keyword id="KW-0479">Metal-binding</keyword>
<keyword id="KW-0547">Nucleotide-binding</keyword>
<keyword id="KW-0573">Peptidoglycan synthesis</keyword>
<keyword id="KW-1185">Reference proteome</keyword>
<dbReference type="EC" id="6.3.2.4" evidence="2"/>
<dbReference type="EMBL" id="CP000356">
    <property type="protein sequence ID" value="ABF53590.1"/>
    <property type="molecule type" value="Genomic_DNA"/>
</dbReference>
<dbReference type="RefSeq" id="WP_011542168.1">
    <property type="nucleotide sequence ID" value="NC_008048.1"/>
</dbReference>
<dbReference type="SMR" id="Q1GRY2"/>
<dbReference type="STRING" id="317655.Sala_1878"/>
<dbReference type="KEGG" id="sal:Sala_1878"/>
<dbReference type="eggNOG" id="COG1181">
    <property type="taxonomic scope" value="Bacteria"/>
</dbReference>
<dbReference type="HOGENOM" id="CLU_039268_1_1_5"/>
<dbReference type="OrthoDB" id="9813261at2"/>
<dbReference type="UniPathway" id="UPA00219"/>
<dbReference type="Proteomes" id="UP000006578">
    <property type="component" value="Chromosome"/>
</dbReference>
<dbReference type="GO" id="GO:0005737">
    <property type="term" value="C:cytoplasm"/>
    <property type="evidence" value="ECO:0007669"/>
    <property type="project" value="UniProtKB-SubCell"/>
</dbReference>
<dbReference type="GO" id="GO:0005524">
    <property type="term" value="F:ATP binding"/>
    <property type="evidence" value="ECO:0007669"/>
    <property type="project" value="UniProtKB-KW"/>
</dbReference>
<dbReference type="GO" id="GO:0008716">
    <property type="term" value="F:D-alanine-D-alanine ligase activity"/>
    <property type="evidence" value="ECO:0007669"/>
    <property type="project" value="UniProtKB-UniRule"/>
</dbReference>
<dbReference type="GO" id="GO:0046872">
    <property type="term" value="F:metal ion binding"/>
    <property type="evidence" value="ECO:0007669"/>
    <property type="project" value="UniProtKB-KW"/>
</dbReference>
<dbReference type="GO" id="GO:0071555">
    <property type="term" value="P:cell wall organization"/>
    <property type="evidence" value="ECO:0007669"/>
    <property type="project" value="UniProtKB-KW"/>
</dbReference>
<dbReference type="GO" id="GO:0009252">
    <property type="term" value="P:peptidoglycan biosynthetic process"/>
    <property type="evidence" value="ECO:0007669"/>
    <property type="project" value="UniProtKB-UniRule"/>
</dbReference>
<dbReference type="GO" id="GO:0008360">
    <property type="term" value="P:regulation of cell shape"/>
    <property type="evidence" value="ECO:0007669"/>
    <property type="project" value="UniProtKB-KW"/>
</dbReference>
<dbReference type="Gene3D" id="3.40.50.20">
    <property type="match status" value="1"/>
</dbReference>
<dbReference type="Gene3D" id="3.30.1490.20">
    <property type="entry name" value="ATP-grasp fold, A domain"/>
    <property type="match status" value="1"/>
</dbReference>
<dbReference type="Gene3D" id="3.30.470.20">
    <property type="entry name" value="ATP-grasp fold, B domain"/>
    <property type="match status" value="1"/>
</dbReference>
<dbReference type="HAMAP" id="MF_00047">
    <property type="entry name" value="Dala_Dala_lig"/>
    <property type="match status" value="1"/>
</dbReference>
<dbReference type="InterPro" id="IPR011761">
    <property type="entry name" value="ATP-grasp"/>
</dbReference>
<dbReference type="InterPro" id="IPR013815">
    <property type="entry name" value="ATP_grasp_subdomain_1"/>
</dbReference>
<dbReference type="InterPro" id="IPR000291">
    <property type="entry name" value="D-Ala_lig_Van_CS"/>
</dbReference>
<dbReference type="InterPro" id="IPR005905">
    <property type="entry name" value="D_ala_D_ala"/>
</dbReference>
<dbReference type="InterPro" id="IPR011095">
    <property type="entry name" value="Dala_Dala_lig_C"/>
</dbReference>
<dbReference type="InterPro" id="IPR011127">
    <property type="entry name" value="Dala_Dala_lig_N"/>
</dbReference>
<dbReference type="InterPro" id="IPR016185">
    <property type="entry name" value="PreATP-grasp_dom_sf"/>
</dbReference>
<dbReference type="NCBIfam" id="TIGR01205">
    <property type="entry name" value="D_ala_D_alaTIGR"/>
    <property type="match status" value="1"/>
</dbReference>
<dbReference type="NCBIfam" id="NF002378">
    <property type="entry name" value="PRK01372.1"/>
    <property type="match status" value="1"/>
</dbReference>
<dbReference type="PANTHER" id="PTHR23132">
    <property type="entry name" value="D-ALANINE--D-ALANINE LIGASE"/>
    <property type="match status" value="1"/>
</dbReference>
<dbReference type="PANTHER" id="PTHR23132:SF23">
    <property type="entry name" value="D-ALANINE--D-ALANINE LIGASE B"/>
    <property type="match status" value="1"/>
</dbReference>
<dbReference type="Pfam" id="PF07478">
    <property type="entry name" value="Dala_Dala_lig_C"/>
    <property type="match status" value="1"/>
</dbReference>
<dbReference type="Pfam" id="PF01820">
    <property type="entry name" value="Dala_Dala_lig_N"/>
    <property type="match status" value="1"/>
</dbReference>
<dbReference type="PIRSF" id="PIRSF039102">
    <property type="entry name" value="Ddl/VanB"/>
    <property type="match status" value="1"/>
</dbReference>
<dbReference type="SUPFAM" id="SSF56059">
    <property type="entry name" value="Glutathione synthetase ATP-binding domain-like"/>
    <property type="match status" value="1"/>
</dbReference>
<dbReference type="SUPFAM" id="SSF52440">
    <property type="entry name" value="PreATP-grasp domain"/>
    <property type="match status" value="1"/>
</dbReference>
<dbReference type="PROSITE" id="PS50975">
    <property type="entry name" value="ATP_GRASP"/>
    <property type="match status" value="1"/>
</dbReference>
<dbReference type="PROSITE" id="PS00843">
    <property type="entry name" value="DALA_DALA_LIGASE_1"/>
    <property type="match status" value="1"/>
</dbReference>
<dbReference type="PROSITE" id="PS00844">
    <property type="entry name" value="DALA_DALA_LIGASE_2"/>
    <property type="match status" value="1"/>
</dbReference>